<name>GABR2_MOUSE</name>
<sequence>MASPPSSGQPRPPPPPPPPARLLLPLLLSLLLSLAPGAWGWARGAPRPPPSSPPLSIMGLMPLTKEVAKGSIGRGVLPAVELAIEQIRNESLLRPYFLDLRLYDTECDNAKGLKAFYDAIKYGPNHLMVFGGVCPSVTSIIAESLQGWNLVQLSFAATTPVLADKKKYPYFFRTVPSDNAVNPAILKLLKHFRWRRVGTLTQDVQRFSEVRNDLTGVLYGEDIEISDTESFSNDPCTSVKKLKGNDVRIILGQFDQNMAAKVFCCAFEESMFGSKYQWIIPGWYEPAWWEQVHVEANSSRCLRRSLLAAMEGYIGVDFEPLSSKQIKTISGKTPQQYEREYNSKRSGVGPSKFHGYAYDGIWVIAKTLQRAMETLHASSRHQRIQDFNYTDHTLGRIILNAMNETNFFGVTGQVVFRNGERMGTIKFTQFQDSREVKVGEYNAVADTLEIINDTIRFQGSEPPKDKTIILEQLRKISLPLYSILSALTILGMIMASAFLFFNIKNRNQKLIKMSSPYMNNLIILGGMLSYASIFLFGLDGSFVSEKTFETLCTVRTWILTVGYTTAFGAMFAKTWRVHAIFKNVKMKKKIIKDQKLLVIVGGMLLIDLCILICWQAVDPLRRTVERYSMEPDPAGRDISIRPLLEHCENTHMTIWLGIVYAYKGLLMLFGCFLAWETRNVSIPALNDSKYIGMSVYNVGIMCIIGAAVSFLTRDQPNVQFCIVALVIIFCSTITLCLVFVPKLITLRTNPDAATQNRRFQFTQNQKKEDSKTSTSVTSVNQASTSRLEGLQSENHRLRMKITELDKDLEEVTMQLQDTPEKTTYIKQNHYQELNDILSLGNFTESTDGGKAILKNHLDQNPQLQWNTTEPSRTCKDPIEDINSPEHIQRRLSLQLPILHHAYLPSIGGVDASCVSPCVSPTASPRHRHVPPSFRVMVSGL</sequence>
<gene>
    <name type="primary">Gabbr2</name>
    <name type="synonym">Gm425</name>
    <name type="synonym">Gpr51</name>
</gene>
<keyword id="KW-1003">Cell membrane</keyword>
<keyword id="KW-0175">Coiled coil</keyword>
<keyword id="KW-1015">Disulfide bond</keyword>
<keyword id="KW-0297">G-protein coupled receptor</keyword>
<keyword id="KW-0325">Glycoprotein</keyword>
<keyword id="KW-0472">Membrane</keyword>
<keyword id="KW-0597">Phosphoprotein</keyword>
<keyword id="KW-0628">Postsynaptic cell membrane</keyword>
<keyword id="KW-0675">Receptor</keyword>
<keyword id="KW-1185">Reference proteome</keyword>
<keyword id="KW-0732">Signal</keyword>
<keyword id="KW-0770">Synapse</keyword>
<keyword id="KW-0807">Transducer</keyword>
<keyword id="KW-0812">Transmembrane</keyword>
<keyword id="KW-1133">Transmembrane helix</keyword>
<organism>
    <name type="scientific">Mus musculus</name>
    <name type="common">Mouse</name>
    <dbReference type="NCBI Taxonomy" id="10090"/>
    <lineage>
        <taxon>Eukaryota</taxon>
        <taxon>Metazoa</taxon>
        <taxon>Chordata</taxon>
        <taxon>Craniata</taxon>
        <taxon>Vertebrata</taxon>
        <taxon>Euteleostomi</taxon>
        <taxon>Mammalia</taxon>
        <taxon>Eutheria</taxon>
        <taxon>Euarchontoglires</taxon>
        <taxon>Glires</taxon>
        <taxon>Rodentia</taxon>
        <taxon>Myomorpha</taxon>
        <taxon>Muroidea</taxon>
        <taxon>Muridae</taxon>
        <taxon>Murinae</taxon>
        <taxon>Mus</taxon>
        <taxon>Mus</taxon>
    </lineage>
</organism>
<accession>Q80T41</accession>
<accession>A2AL05</accession>
<dbReference type="EMBL" id="AL772399">
    <property type="status" value="NOT_ANNOTATED_CDS"/>
    <property type="molecule type" value="Genomic_DNA"/>
</dbReference>
<dbReference type="EMBL" id="AL831741">
    <property type="status" value="NOT_ANNOTATED_CDS"/>
    <property type="molecule type" value="Genomic_DNA"/>
</dbReference>
<dbReference type="EMBL" id="AL844224">
    <property type="status" value="NOT_ANNOTATED_CDS"/>
    <property type="molecule type" value="Genomic_DNA"/>
</dbReference>
<dbReference type="EMBL" id="BX005247">
    <property type="status" value="NOT_ANNOTATED_CDS"/>
    <property type="molecule type" value="Genomic_DNA"/>
</dbReference>
<dbReference type="EMBL" id="BX571848">
    <property type="status" value="NOT_ANNOTATED_CDS"/>
    <property type="molecule type" value="Genomic_DNA"/>
</dbReference>
<dbReference type="EMBL" id="AY255605">
    <property type="protein sequence ID" value="AAO85117.1"/>
    <property type="molecule type" value="mRNA"/>
</dbReference>
<dbReference type="CCDS" id="CCDS38758.1"/>
<dbReference type="RefSeq" id="NP_001074610.1">
    <property type="nucleotide sequence ID" value="NM_001081141.2"/>
</dbReference>
<dbReference type="SMR" id="Q80T41"/>
<dbReference type="BioGRID" id="232404">
    <property type="interactions" value="11"/>
</dbReference>
<dbReference type="ComplexPortal" id="CPX-2990">
    <property type="entry name" value="GABA-B receptor complex"/>
</dbReference>
<dbReference type="CORUM" id="Q80T41"/>
<dbReference type="FunCoup" id="Q80T41">
    <property type="interactions" value="964"/>
</dbReference>
<dbReference type="IntAct" id="Q80T41">
    <property type="interactions" value="4"/>
</dbReference>
<dbReference type="MINT" id="Q80T41"/>
<dbReference type="STRING" id="10090.ENSMUSP00000103378"/>
<dbReference type="GlyConnect" id="2329">
    <property type="glycosylation" value="3 N-Linked glycans (1 site)"/>
</dbReference>
<dbReference type="GlyCosmos" id="Q80T41">
    <property type="glycosylation" value="5 sites, 3 glycans"/>
</dbReference>
<dbReference type="GlyGen" id="Q80T41">
    <property type="glycosylation" value="7 sites, 7 N-linked glycans (4 sites), 1 O-linked glycan (1 site)"/>
</dbReference>
<dbReference type="iPTMnet" id="Q80T41"/>
<dbReference type="PhosphoSitePlus" id="Q80T41"/>
<dbReference type="SwissPalm" id="Q80T41"/>
<dbReference type="PaxDb" id="10090-ENSMUSP00000103378"/>
<dbReference type="PeptideAtlas" id="Q80T41"/>
<dbReference type="ProteomicsDB" id="268837"/>
<dbReference type="Pumba" id="Q80T41"/>
<dbReference type="ABCD" id="Q80T41">
    <property type="antibodies" value="2 sequenced antibodies"/>
</dbReference>
<dbReference type="Antibodypedia" id="2939">
    <property type="antibodies" value="596 antibodies from 42 providers"/>
</dbReference>
<dbReference type="Ensembl" id="ENSMUST00000107749.4">
    <property type="protein sequence ID" value="ENSMUSP00000103378.3"/>
    <property type="gene ID" value="ENSMUSG00000039809.11"/>
</dbReference>
<dbReference type="GeneID" id="242425"/>
<dbReference type="KEGG" id="mmu:242425"/>
<dbReference type="UCSC" id="uc008sug.1">
    <property type="organism name" value="mouse"/>
</dbReference>
<dbReference type="AGR" id="MGI:2386030"/>
<dbReference type="CTD" id="9568"/>
<dbReference type="MGI" id="MGI:2386030">
    <property type="gene designation" value="Gabbr2"/>
</dbReference>
<dbReference type="VEuPathDB" id="HostDB:ENSMUSG00000039809"/>
<dbReference type="eggNOG" id="KOG1055">
    <property type="taxonomic scope" value="Eukaryota"/>
</dbReference>
<dbReference type="GeneTree" id="ENSGT00940000155783"/>
<dbReference type="HOGENOM" id="CLU_005240_0_0_1"/>
<dbReference type="InParanoid" id="Q80T41"/>
<dbReference type="OMA" id="DACTNVN"/>
<dbReference type="OrthoDB" id="2150267at2759"/>
<dbReference type="PhylomeDB" id="Q80T41"/>
<dbReference type="TreeFam" id="TF313965"/>
<dbReference type="Reactome" id="R-MMU-1296041">
    <property type="pathway name" value="Activation of G protein gated Potassium channels"/>
</dbReference>
<dbReference type="Reactome" id="R-MMU-418594">
    <property type="pathway name" value="G alpha (i) signalling events"/>
</dbReference>
<dbReference type="Reactome" id="R-MMU-420499">
    <property type="pathway name" value="Class C/3 (Metabotropic glutamate/pheromone receptors)"/>
</dbReference>
<dbReference type="Reactome" id="R-MMU-977444">
    <property type="pathway name" value="GABA B receptor activation"/>
</dbReference>
<dbReference type="Reactome" id="R-MMU-997272">
    <property type="pathway name" value="Inhibition of voltage gated Ca2+ channels via Gbeta/gamma subunits"/>
</dbReference>
<dbReference type="BioGRID-ORCS" id="242425">
    <property type="hits" value="2 hits in 81 CRISPR screens"/>
</dbReference>
<dbReference type="CD-CODE" id="CE726F99">
    <property type="entry name" value="Postsynaptic density"/>
</dbReference>
<dbReference type="PRO" id="PR:Q80T41"/>
<dbReference type="Proteomes" id="UP000000589">
    <property type="component" value="Chromosome 4"/>
</dbReference>
<dbReference type="RNAct" id="Q80T41">
    <property type="molecule type" value="protein"/>
</dbReference>
<dbReference type="Bgee" id="ENSMUSG00000039809">
    <property type="expression patterns" value="Expressed in dentate gyrus of hippocampal formation granule cell and 36 other cell types or tissues"/>
</dbReference>
<dbReference type="ExpressionAtlas" id="Q80T41">
    <property type="expression patterns" value="baseline and differential"/>
</dbReference>
<dbReference type="GO" id="GO:0005737">
    <property type="term" value="C:cytoplasm"/>
    <property type="evidence" value="ECO:0000314"/>
    <property type="project" value="MGI"/>
</dbReference>
<dbReference type="GO" id="GO:1902712">
    <property type="term" value="C:G protein-coupled GABA receptor complex"/>
    <property type="evidence" value="ECO:0000266"/>
    <property type="project" value="ComplexPortal"/>
</dbReference>
<dbReference type="GO" id="GO:0038039">
    <property type="term" value="C:G protein-coupled receptor heterodimeric complex"/>
    <property type="evidence" value="ECO:0000250"/>
    <property type="project" value="UniProtKB"/>
</dbReference>
<dbReference type="GO" id="GO:0043005">
    <property type="term" value="C:neuron projection"/>
    <property type="evidence" value="ECO:0000314"/>
    <property type="project" value="MGI"/>
</dbReference>
<dbReference type="GO" id="GO:0005886">
    <property type="term" value="C:plasma membrane"/>
    <property type="evidence" value="ECO:0000250"/>
    <property type="project" value="UniProtKB"/>
</dbReference>
<dbReference type="GO" id="GO:0045211">
    <property type="term" value="C:postsynaptic membrane"/>
    <property type="evidence" value="ECO:0007669"/>
    <property type="project" value="UniProtKB-SubCell"/>
</dbReference>
<dbReference type="GO" id="GO:0004965">
    <property type="term" value="F:G protein-coupled GABA receptor activity"/>
    <property type="evidence" value="ECO:0007669"/>
    <property type="project" value="Ensembl"/>
</dbReference>
<dbReference type="GO" id="GO:0046982">
    <property type="term" value="F:protein heterodimerization activity"/>
    <property type="evidence" value="ECO:0007669"/>
    <property type="project" value="Ensembl"/>
</dbReference>
<dbReference type="GO" id="GO:0007193">
    <property type="term" value="P:adenylate cyclase-inhibiting G protein-coupled receptor signaling pathway"/>
    <property type="evidence" value="ECO:0000266"/>
    <property type="project" value="ComplexPortal"/>
</dbReference>
<dbReference type="GO" id="GO:0007214">
    <property type="term" value="P:gamma-aminobutyric acid signaling pathway"/>
    <property type="evidence" value="ECO:0000250"/>
    <property type="project" value="UniProtKB"/>
</dbReference>
<dbReference type="GO" id="GO:0051932">
    <property type="term" value="P:synaptic transmission, GABAergic"/>
    <property type="evidence" value="ECO:0000303"/>
    <property type="project" value="ComplexPortal"/>
</dbReference>
<dbReference type="CDD" id="cd15294">
    <property type="entry name" value="7tmC_GABA-B-R2"/>
    <property type="match status" value="1"/>
</dbReference>
<dbReference type="CDD" id="cd06366">
    <property type="entry name" value="PBP1_GABAb_receptor"/>
    <property type="match status" value="1"/>
</dbReference>
<dbReference type="FunFam" id="3.40.50.2300:FF:000063">
    <property type="entry name" value="Gamma-aminobutyric acid type B receptor subunit"/>
    <property type="match status" value="1"/>
</dbReference>
<dbReference type="FunFam" id="3.40.50.2300:FF:000072">
    <property type="entry name" value="Gamma-aminobutyric acid type B receptor subunit 2"/>
    <property type="match status" value="1"/>
</dbReference>
<dbReference type="Gene3D" id="3.40.50.2300">
    <property type="match status" value="2"/>
</dbReference>
<dbReference type="InterPro" id="IPR001828">
    <property type="entry name" value="ANF_lig-bd_rcpt"/>
</dbReference>
<dbReference type="InterPro" id="IPR041689">
    <property type="entry name" value="GBR2_CC"/>
</dbReference>
<dbReference type="InterPro" id="IPR002455">
    <property type="entry name" value="GPCR3_GABA-B"/>
</dbReference>
<dbReference type="InterPro" id="IPR000337">
    <property type="entry name" value="GPCR_3"/>
</dbReference>
<dbReference type="InterPro" id="IPR017978">
    <property type="entry name" value="GPCR_3_C"/>
</dbReference>
<dbReference type="InterPro" id="IPR017979">
    <property type="entry name" value="GPCR_3_CS"/>
</dbReference>
<dbReference type="InterPro" id="IPR002457">
    <property type="entry name" value="GPCR_3_GABA_rcpt_B2"/>
</dbReference>
<dbReference type="InterPro" id="IPR028082">
    <property type="entry name" value="Peripla_BP_I"/>
</dbReference>
<dbReference type="PANTHER" id="PTHR10519">
    <property type="entry name" value="GABA-B RECEPTOR"/>
    <property type="match status" value="1"/>
</dbReference>
<dbReference type="PANTHER" id="PTHR10519:SF74">
    <property type="entry name" value="GAMMA-AMINOBUTYRIC ACID TYPE B RECEPTOR SUBUNIT 2"/>
    <property type="match status" value="1"/>
</dbReference>
<dbReference type="Pfam" id="PF00003">
    <property type="entry name" value="7tm_3"/>
    <property type="match status" value="1"/>
</dbReference>
<dbReference type="Pfam" id="PF01094">
    <property type="entry name" value="ANF_receptor"/>
    <property type="match status" value="1"/>
</dbReference>
<dbReference type="Pfam" id="PF18455">
    <property type="entry name" value="GBR2_CC"/>
    <property type="match status" value="1"/>
</dbReference>
<dbReference type="PRINTS" id="PR01178">
    <property type="entry name" value="GABAB2RECPTR"/>
</dbReference>
<dbReference type="PRINTS" id="PR01176">
    <property type="entry name" value="GABABRECEPTR"/>
</dbReference>
<dbReference type="PRINTS" id="PR00248">
    <property type="entry name" value="GPCRMGR"/>
</dbReference>
<dbReference type="SUPFAM" id="SSF53822">
    <property type="entry name" value="Periplasmic binding protein-like I"/>
    <property type="match status" value="1"/>
</dbReference>
<dbReference type="PROSITE" id="PS00981">
    <property type="entry name" value="G_PROTEIN_RECEP_F3_3"/>
    <property type="match status" value="1"/>
</dbReference>
<dbReference type="PROSITE" id="PS50259">
    <property type="entry name" value="G_PROTEIN_RECEP_F3_4"/>
    <property type="match status" value="1"/>
</dbReference>
<protein>
    <recommendedName>
        <fullName>Gamma-aminobutyric acid type B receptor subunit 2</fullName>
        <shortName>GABA-B receptor 2</shortName>
        <shortName>GABA-B-R2</shortName>
        <shortName>GABA-BR2</shortName>
        <shortName>GABABR2</shortName>
        <shortName>Gb2</shortName>
    </recommendedName>
    <alternativeName>
        <fullName>G-protein coupled receptor 51</fullName>
    </alternativeName>
</protein>
<proteinExistence type="evidence at protein level"/>
<feature type="signal peptide" evidence="4">
    <location>
        <begin position="1"/>
        <end position="40"/>
    </location>
</feature>
<feature type="chain" id="PRO_0000306250" description="Gamma-aminobutyric acid type B receptor subunit 2">
    <location>
        <begin position="41"/>
        <end position="940"/>
    </location>
</feature>
<feature type="topological domain" description="Extracellular" evidence="4">
    <location>
        <begin position="41"/>
        <end position="482"/>
    </location>
</feature>
<feature type="transmembrane region" description="Helical; Name=1" evidence="4">
    <location>
        <begin position="483"/>
        <end position="503"/>
    </location>
</feature>
<feature type="topological domain" description="Cytoplasmic" evidence="4">
    <location>
        <begin position="504"/>
        <end position="521"/>
    </location>
</feature>
<feature type="transmembrane region" description="Helical; Name=2" evidence="4">
    <location>
        <begin position="522"/>
        <end position="542"/>
    </location>
</feature>
<feature type="topological domain" description="Extracellular" evidence="4">
    <location>
        <begin position="543"/>
        <end position="550"/>
    </location>
</feature>
<feature type="transmembrane region" description="Helical; Name=3" evidence="4">
    <location>
        <begin position="551"/>
        <end position="571"/>
    </location>
</feature>
<feature type="topological domain" description="Cytoplasmic" evidence="4">
    <location>
        <begin position="572"/>
        <end position="596"/>
    </location>
</feature>
<feature type="transmembrane region" description="Helical; Name=4" evidence="4">
    <location>
        <begin position="597"/>
        <end position="617"/>
    </location>
</feature>
<feature type="topological domain" description="Extracellular" evidence="4">
    <location>
        <begin position="618"/>
        <end position="653"/>
    </location>
</feature>
<feature type="transmembrane region" description="Helical; Name=5" evidence="4">
    <location>
        <begin position="654"/>
        <end position="674"/>
    </location>
</feature>
<feature type="topological domain" description="Cytoplasmic" evidence="4">
    <location>
        <begin position="675"/>
        <end position="690"/>
    </location>
</feature>
<feature type="transmembrane region" description="Helical; Name=6" evidence="4">
    <location>
        <begin position="691"/>
        <end position="711"/>
    </location>
</feature>
<feature type="topological domain" description="Extracellular" evidence="4">
    <location>
        <begin position="712"/>
        <end position="719"/>
    </location>
</feature>
<feature type="transmembrane region" description="Helical; Name=7" evidence="4">
    <location>
        <begin position="720"/>
        <end position="740"/>
    </location>
</feature>
<feature type="topological domain" description="Cytoplasmic" evidence="4">
    <location>
        <begin position="741"/>
        <end position="940"/>
    </location>
</feature>
<feature type="region of interest" description="Disordered" evidence="5">
    <location>
        <begin position="762"/>
        <end position="789"/>
    </location>
</feature>
<feature type="coiled-coil region" evidence="4">
    <location>
        <begin position="781"/>
        <end position="818"/>
    </location>
</feature>
<feature type="compositionally biased region" description="Polar residues" evidence="5">
    <location>
        <begin position="772"/>
        <end position="786"/>
    </location>
</feature>
<feature type="modified residue" description="Phosphoserine" evidence="10">
    <location>
        <position position="775"/>
    </location>
</feature>
<feature type="modified residue" description="Phosphoserine" evidence="10">
    <location>
        <position position="778"/>
    </location>
</feature>
<feature type="modified residue" description="Phosphothreonine" evidence="10">
    <location>
        <position position="818"/>
    </location>
</feature>
<feature type="modified residue" description="Phosphoserine" evidence="9 10">
    <location>
        <position position="883"/>
    </location>
</feature>
<feature type="modified residue" description="Phosphoserine" evidence="10">
    <location>
        <position position="892"/>
    </location>
</feature>
<feature type="modified residue" description="Phosphoserine" evidence="10">
    <location>
        <position position="912"/>
    </location>
</feature>
<feature type="modified residue" description="Phosphoserine" evidence="10">
    <location>
        <position position="915"/>
    </location>
</feature>
<feature type="modified residue" description="Phosphoserine" evidence="10">
    <location>
        <position position="919"/>
    </location>
</feature>
<feature type="modified residue" description="Phosphoserine" evidence="10">
    <location>
        <position position="923"/>
    </location>
</feature>
<feature type="glycosylation site" description="N-linked (GlcNAc...) asparagine" evidence="4">
    <location>
        <position position="89"/>
    </location>
</feature>
<feature type="glycosylation site" description="N-linked (GlcNAc...) asparagine" evidence="4">
    <location>
        <position position="297"/>
    </location>
</feature>
<feature type="glycosylation site" description="N-linked (GlcNAc...) asparagine" evidence="4">
    <location>
        <position position="388"/>
    </location>
</feature>
<feature type="glycosylation site" description="N-linked (GlcNAc...) asparagine" evidence="4">
    <location>
        <position position="403"/>
    </location>
</feature>
<feature type="glycosylation site" description="N-linked (GlcNAc...) asparagine" evidence="4">
    <location>
        <position position="452"/>
    </location>
</feature>
<feature type="disulfide bond" evidence="1">
    <location>
        <begin position="107"/>
        <end position="134"/>
    </location>
</feature>
<feature type="disulfide bond" evidence="1">
    <location>
        <begin position="236"/>
        <end position="265"/>
    </location>
</feature>
<feature type="disulfide bond" evidence="1">
    <location>
        <begin position="264"/>
        <end position="301"/>
    </location>
</feature>
<evidence type="ECO:0000250" key="1"/>
<evidence type="ECO:0000250" key="2">
    <source>
        <dbReference type="UniProtKB" id="O75899"/>
    </source>
</evidence>
<evidence type="ECO:0000250" key="3">
    <source>
        <dbReference type="UniProtKB" id="O88871"/>
    </source>
</evidence>
<evidence type="ECO:0000255" key="4"/>
<evidence type="ECO:0000256" key="5">
    <source>
        <dbReference type="SAM" id="MobiDB-lite"/>
    </source>
</evidence>
<evidence type="ECO:0000269" key="6">
    <source>
    </source>
</evidence>
<evidence type="ECO:0000269" key="7">
    <source>
    </source>
</evidence>
<evidence type="ECO:0000305" key="8"/>
<evidence type="ECO:0007744" key="9">
    <source>
    </source>
</evidence>
<evidence type="ECO:0007744" key="10">
    <source>
    </source>
</evidence>
<comment type="function">
    <text evidence="2 6 7">Component of a heterodimeric G-protein coupled receptor for GABA, formed by GABBR1 and GABBR2 (PubMed:10075644). Within the heterodimeric GABA receptor, only GABBR1 seems to bind agonists, while GABBR2 mediates coupling to G proteins (By similarity). Ligand binding causes a conformation change that triggers signaling via guanine nucleotide-binding proteins (G proteins) and modulates the activity of down-stream effectors, such as adenylate cyclase (PubMed:10075644). Signaling inhibits adenylate cyclase, stimulates phospholipase A2, activates potassium channels, inactivates voltage-dependent calcium-channels and modulates inositol phospholipid hydrolysis (PubMed:10075644). Plays a critical role in the fine-tuning of inhibitory synaptic transmission (By similarity). Pre-synaptic GABA receptor inhibits neurotransmitter release by down-regulating high-voltage activated calcium channels, whereas postsynaptic GABA receptor decreases neuronal excitability by activating a prominent inwardly rectifying potassium (Kir) conductance that underlies the late inhibitory postsynaptic potentials (PubMed:10075644). Not only implicated in synaptic inhibition but also in hippocampal long-term potentiation, slow wave sleep, muscle relaxation and antinociception (By similarity). Interacts with KCTD8, KCTD12 and KCTD16; this interaction determines the pharmacology and kinetics of the receptor response, the KCTD proteins markedly accelerating the GABA-B response, although to different extents (PubMed:20400944).</text>
</comment>
<comment type="subunit">
    <text evidence="3 6">Heterodimer of GABBR1 and GABBR2 (PubMed:10075644). Homodimers may form, but are inactive (By similarity). Interacts (via C-terminus) with ATF4 (via leucine zipper domain) (By similarity).</text>
</comment>
<comment type="subcellular location">
    <subcellularLocation>
        <location evidence="7">Cell membrane</location>
        <topology evidence="1">Multi-pass membrane protein</topology>
    </subcellularLocation>
    <subcellularLocation>
        <location evidence="7">Postsynaptic cell membrane</location>
        <topology evidence="1">Multi-pass membrane protein</topology>
    </subcellularLocation>
    <text evidence="1">Coexpression of GABBR1 and GABBR2 is required for GABBR1 maturation and transport to the plasma membrane. In contrast, GABBR2 does not depend on GABBR1 for transport to the cell membrane (By similarity).</text>
</comment>
<comment type="domain">
    <text evidence="1">Alpha-helical parts of the C-terminal intracellular region mediate heterodimeric interaction with GABBR1.</text>
</comment>
<comment type="similarity">
    <text evidence="8">Belongs to the G-protein coupled receptor 3 family. GABA-B receptor subfamily.</text>
</comment>
<reference key="1">
    <citation type="journal article" date="2009" name="PLoS Biol.">
        <title>Lineage-specific biology revealed by a finished genome assembly of the mouse.</title>
        <authorList>
            <person name="Church D.M."/>
            <person name="Goodstadt L."/>
            <person name="Hillier L.W."/>
            <person name="Zody M.C."/>
            <person name="Goldstein S."/>
            <person name="She X."/>
            <person name="Bult C.J."/>
            <person name="Agarwala R."/>
            <person name="Cherry J.L."/>
            <person name="DiCuccio M."/>
            <person name="Hlavina W."/>
            <person name="Kapustin Y."/>
            <person name="Meric P."/>
            <person name="Maglott D."/>
            <person name="Birtle Z."/>
            <person name="Marques A.C."/>
            <person name="Graves T."/>
            <person name="Zhou S."/>
            <person name="Teague B."/>
            <person name="Potamousis K."/>
            <person name="Churas C."/>
            <person name="Place M."/>
            <person name="Herschleb J."/>
            <person name="Runnheim R."/>
            <person name="Forrest D."/>
            <person name="Amos-Landgraf J."/>
            <person name="Schwartz D.C."/>
            <person name="Cheng Z."/>
            <person name="Lindblad-Toh K."/>
            <person name="Eichler E.E."/>
            <person name="Ponting C.P."/>
        </authorList>
    </citation>
    <scope>NUCLEOTIDE SEQUENCE [LARGE SCALE GENOMIC DNA]</scope>
    <source>
        <strain>C57BL/6J</strain>
    </source>
</reference>
<reference key="2">
    <citation type="journal article" date="2003" name="Proc. Natl. Acad. Sci. U.S.A.">
        <title>The G protein-coupled receptor repertoires of human and mouse.</title>
        <authorList>
            <person name="Vassilatis D.K."/>
            <person name="Hohmann J.G."/>
            <person name="Zeng H."/>
            <person name="Li F."/>
            <person name="Ranchalis J.E."/>
            <person name="Mortrud M.T."/>
            <person name="Brown A."/>
            <person name="Rodriguez S.S."/>
            <person name="Weller J.R."/>
            <person name="Wright A.C."/>
            <person name="Bergmann J.E."/>
            <person name="Gaitanaris G.A."/>
        </authorList>
    </citation>
    <scope>NUCLEOTIDE SEQUENCE [LARGE SCALE MRNA] OF 869-940</scope>
</reference>
<reference key="3">
    <citation type="journal article" date="1999" name="J. Biol. Chem.">
        <title>Identification of a GABAB receptor subunit, gb2, required for functional GABAB receptor activity.</title>
        <authorList>
            <person name="Ng G.Y.K."/>
            <person name="Clark J."/>
            <person name="Coulombe N."/>
            <person name="Ethier N."/>
            <person name="Hebert T.E."/>
            <person name="Sullivan R."/>
            <person name="Kargman S."/>
            <person name="Chateauneuf A."/>
            <person name="Tsukamoto N."/>
            <person name="McDonald T."/>
            <person name="Whiting P."/>
            <person name="Mezey E."/>
            <person name="Johnson M.P."/>
            <person name="Liu Q."/>
            <person name="Kolakowski L.F. Jr."/>
            <person name="Evans J.F."/>
            <person name="Bonner T.I."/>
            <person name="O'Neill G.P."/>
        </authorList>
    </citation>
    <scope>FUNCTION</scope>
    <scope>INTERACTION WITH GABBR1</scope>
</reference>
<reference key="4">
    <citation type="journal article" date="2006" name="Mol. Cell. Proteomics">
        <title>Comprehensive identification of phosphorylation sites in postsynaptic density preparations.</title>
        <authorList>
            <person name="Trinidad J.C."/>
            <person name="Specht C.G."/>
            <person name="Thalhammer A."/>
            <person name="Schoepfer R."/>
            <person name="Burlingame A.L."/>
        </authorList>
    </citation>
    <scope>PHOSPHORYLATION [LARGE SCALE ANALYSIS] AT SER-883</scope>
    <scope>IDENTIFICATION BY MASS SPECTROMETRY [LARGE SCALE ANALYSIS]</scope>
    <source>
        <tissue>Brain</tissue>
    </source>
</reference>
<reference key="5">
    <citation type="journal article" date="2010" name="Cell">
        <title>A tissue-specific atlas of mouse protein phosphorylation and expression.</title>
        <authorList>
            <person name="Huttlin E.L."/>
            <person name="Jedrychowski M.P."/>
            <person name="Elias J.E."/>
            <person name="Goswami T."/>
            <person name="Rad R."/>
            <person name="Beausoleil S.A."/>
            <person name="Villen J."/>
            <person name="Haas W."/>
            <person name="Sowa M.E."/>
            <person name="Gygi S.P."/>
        </authorList>
    </citation>
    <scope>PHOSPHORYLATION [LARGE SCALE ANALYSIS] AT SER-775; SER-778; THR-818; SER-883; SER-892; SER-912; SER-915; SER-919 AND SER-923</scope>
    <scope>IDENTIFICATION BY MASS SPECTROMETRY [LARGE SCALE ANALYSIS]</scope>
    <source>
        <tissue>Brain</tissue>
    </source>
</reference>
<reference key="6">
    <citation type="journal article" date="2010" name="Nature">
        <title>Native GABA(B) receptors are heteromultimers with a family of auxiliary subunits.</title>
        <authorList>
            <person name="Schwenk J."/>
            <person name="Metz M."/>
            <person name="Zolles G."/>
            <person name="Turecek R."/>
            <person name="Fritzius T."/>
            <person name="Bildl W."/>
            <person name="Tarusawa E."/>
            <person name="Kulik A."/>
            <person name="Unger A."/>
            <person name="Ivankova K."/>
            <person name="Seddik R."/>
            <person name="Tiao J.Y."/>
            <person name="Rajalu M."/>
            <person name="Trojanova J."/>
            <person name="Rohde V."/>
            <person name="Gassmann M."/>
            <person name="Schulte U."/>
            <person name="Fakler B."/>
            <person name="Bettler B."/>
        </authorList>
    </citation>
    <scope>INTERACTION WITH KCTD8; KCTD12; KCTD12B AND KCTD16</scope>
    <scope>FUNCTION</scope>
    <scope>SUBCELLULAR LOCATION</scope>
</reference>